<gene>
    <name type="primary">RPL23A</name>
</gene>
<protein>
    <recommendedName>
        <fullName evidence="2">Large ribosomal subunit protein uL23</fullName>
    </recommendedName>
    <alternativeName>
        <fullName>60S ribosomal protein L23A</fullName>
    </alternativeName>
</protein>
<reference key="1">
    <citation type="submission" date="1997-10" db="EMBL/GenBank/DDBJ databases">
        <authorList>
            <person name="Prabhavalkar D.S."/>
            <person name="Baysdorfer C."/>
        </authorList>
    </citation>
    <scope>NUCLEOTIDE SEQUENCE [MRNA]</scope>
</reference>
<sequence length="154" mass="17351">MAPPAKVAKKPDGKAQALKVAKAVKSGVSTLQKKAKKIRTSVTFHRPKTLKKDRNPKYPRISAPPRNKLDHYQILKYPLTTESAMKKIEDNNTLVFIVDIRADKKKIKAAVKKMYDIQTKKVNTLIRPDGTKKAYVRLTPDYDALDIANKIGII</sequence>
<keyword id="KW-0687">Ribonucleoprotein</keyword>
<keyword id="KW-0689">Ribosomal protein</keyword>
<keyword id="KW-0694">RNA-binding</keyword>
<keyword id="KW-0699">rRNA-binding</keyword>
<feature type="chain" id="PRO_0000129476" description="Large ribosomal subunit protein uL23">
    <location>
        <begin position="1"/>
        <end position="154"/>
    </location>
</feature>
<dbReference type="EMBL" id="AF031542">
    <property type="protein sequence ID" value="AAB86852.1"/>
    <property type="molecule type" value="mRNA"/>
</dbReference>
<dbReference type="SMR" id="O22644"/>
<dbReference type="GO" id="GO:1990904">
    <property type="term" value="C:ribonucleoprotein complex"/>
    <property type="evidence" value="ECO:0007669"/>
    <property type="project" value="UniProtKB-KW"/>
</dbReference>
<dbReference type="GO" id="GO:0005840">
    <property type="term" value="C:ribosome"/>
    <property type="evidence" value="ECO:0007669"/>
    <property type="project" value="UniProtKB-KW"/>
</dbReference>
<dbReference type="GO" id="GO:0019843">
    <property type="term" value="F:rRNA binding"/>
    <property type="evidence" value="ECO:0007669"/>
    <property type="project" value="UniProtKB-KW"/>
</dbReference>
<dbReference type="GO" id="GO:0003735">
    <property type="term" value="F:structural constituent of ribosome"/>
    <property type="evidence" value="ECO:0007669"/>
    <property type="project" value="InterPro"/>
</dbReference>
<dbReference type="GO" id="GO:0006412">
    <property type="term" value="P:translation"/>
    <property type="evidence" value="ECO:0007669"/>
    <property type="project" value="InterPro"/>
</dbReference>
<dbReference type="FunFam" id="3.30.70.330:FF:000035">
    <property type="entry name" value="60S ribosomal protein L23a"/>
    <property type="match status" value="1"/>
</dbReference>
<dbReference type="Gene3D" id="3.30.70.330">
    <property type="match status" value="1"/>
</dbReference>
<dbReference type="HAMAP" id="MF_01369_A">
    <property type="entry name" value="Ribosomal_uL23_A"/>
    <property type="match status" value="1"/>
</dbReference>
<dbReference type="InterPro" id="IPR012677">
    <property type="entry name" value="Nucleotide-bd_a/b_plait_sf"/>
</dbReference>
<dbReference type="InterPro" id="IPR019985">
    <property type="entry name" value="Ribosomal_uL23"/>
</dbReference>
<dbReference type="InterPro" id="IPR013025">
    <property type="entry name" value="Ribosomal_uL23-like"/>
</dbReference>
<dbReference type="InterPro" id="IPR012678">
    <property type="entry name" value="Ribosomal_uL23/eL15/eS24_sf"/>
</dbReference>
<dbReference type="InterPro" id="IPR001014">
    <property type="entry name" value="Ribosomal_uL23_CS"/>
</dbReference>
<dbReference type="InterPro" id="IPR005633">
    <property type="entry name" value="Ribosomal_uL23_N"/>
</dbReference>
<dbReference type="NCBIfam" id="NF011118">
    <property type="entry name" value="PRK14548.1"/>
    <property type="match status" value="1"/>
</dbReference>
<dbReference type="NCBIfam" id="TIGR03636">
    <property type="entry name" value="uL23_arch"/>
    <property type="match status" value="1"/>
</dbReference>
<dbReference type="PANTHER" id="PTHR11620">
    <property type="entry name" value="60S RIBOSOMAL PROTEIN L23A"/>
    <property type="match status" value="1"/>
</dbReference>
<dbReference type="Pfam" id="PF00276">
    <property type="entry name" value="Ribosomal_L23"/>
    <property type="match status" value="1"/>
</dbReference>
<dbReference type="Pfam" id="PF03939">
    <property type="entry name" value="Ribosomal_L23eN"/>
    <property type="match status" value="1"/>
</dbReference>
<dbReference type="SUPFAM" id="SSF54189">
    <property type="entry name" value="Ribosomal proteins S24e, L23 and L15e"/>
    <property type="match status" value="1"/>
</dbReference>
<dbReference type="PROSITE" id="PS00050">
    <property type="entry name" value="RIBOSOMAL_L23"/>
    <property type="match status" value="1"/>
</dbReference>
<name>RL23A_FRIAG</name>
<proteinExistence type="evidence at transcript level"/>
<organism>
    <name type="scientific">Fritillaria agrestis</name>
    <name type="common">Stinkbells</name>
    <dbReference type="NCBI Taxonomy" id="64177"/>
    <lineage>
        <taxon>Eukaryota</taxon>
        <taxon>Viridiplantae</taxon>
        <taxon>Streptophyta</taxon>
        <taxon>Embryophyta</taxon>
        <taxon>Tracheophyta</taxon>
        <taxon>Spermatophyta</taxon>
        <taxon>Magnoliopsida</taxon>
        <taxon>Liliopsida</taxon>
        <taxon>Liliales</taxon>
        <taxon>Liliaceae</taxon>
        <taxon>Fritillaria</taxon>
    </lineage>
</organism>
<comment type="function">
    <text evidence="1">This protein binds to a specific region on the 26S rRNA.</text>
</comment>
<comment type="similarity">
    <text evidence="2">Belongs to the universal ribosomal protein uL23 family.</text>
</comment>
<evidence type="ECO:0000250" key="1"/>
<evidence type="ECO:0000305" key="2"/>
<accession>O22644</accession>